<sequence>MEFEFFFQIALILLSTKLAGDLSVRLGQPSVLGKLIVGIVIGPAVLGWIENSELLTQLSNVGVILLMFMAGLETDLEELNANRNSSLAVALGGIILPFVGGYVSGLVMGMEQGNAVFLGLLLCATSVSISVQTLRDLGKMKTRESTTMLGAAVFDDILVVILLAFAMSFLGTDDVNLTMVILKKVVFFASIILIGWKGVPAIMRWLSPLRVSESIVSAALIICFSFAYFGELLGIAGIIGAFAAGIAISQTNYKHEVEKKVEPIAYAMFVPVFFVSIGMNITFDGIGNQIWFILALTVIAVLTKLIGCGFGARMTGFDAKSSAIIGAGMVSRGEVALIIAGTGLSSGLLAQDYFTAIVIVVILTTMITPPMLKYTFGAKDKAMKASK</sequence>
<organism>
    <name type="scientific">Bacillus cereus</name>
    <dbReference type="NCBI Taxonomy" id="1396"/>
    <lineage>
        <taxon>Bacteria</taxon>
        <taxon>Bacillati</taxon>
        <taxon>Bacillota</taxon>
        <taxon>Bacilli</taxon>
        <taxon>Bacillales</taxon>
        <taxon>Bacillaceae</taxon>
        <taxon>Bacillus</taxon>
        <taxon>Bacillus cereus group</taxon>
    </lineage>
</organism>
<keyword id="KW-0050">Antiport</keyword>
<keyword id="KW-0309">Germination</keyword>
<keyword id="KW-0406">Ion transport</keyword>
<keyword id="KW-0472">Membrane</keyword>
<keyword id="KW-0915">Sodium</keyword>
<keyword id="KW-0739">Sodium transport</keyword>
<keyword id="KW-0812">Transmembrane</keyword>
<keyword id="KW-1133">Transmembrane helix</keyword>
<keyword id="KW-0813">Transport</keyword>
<accession>Q9KI10</accession>
<comment type="function">
    <text evidence="2 3 4">Na(+)/H(+) antiporter that extrudes sodium in exchange for external protons. Can also use potassium as a coupling ion, without completely replacing H(+). This Na(+)/H(+)-K(+) antiport is much more rapid than Na(+)/H(+) antiport. Can also extrude lithium. Important for the inosine-dependent germination of spores.</text>
</comment>
<comment type="biophysicochemical properties">
    <kinetics>
        <KM evidence="3">1.5 mM for sodium (at pH 8.0)</KM>
        <KM evidence="3">25 mM for sodium (at pH 7.0)</KM>
    </kinetics>
</comment>
<comment type="subcellular location">
    <subcellularLocation>
        <location evidence="3">Membrane</location>
        <topology evidence="3">Multi-pass membrane protein</topology>
    </subcellularLocation>
</comment>
<comment type="disruption phenotype">
    <text evidence="2">Disruption causes a major defect in inosine-dependent germination, but does not significantly affect germination in response to L-alanine.</text>
</comment>
<comment type="similarity">
    <text evidence="5">Belongs to the monovalent cation:proton antiporter 2 (CPA2) transporter (TC 2.A.37) family.</text>
</comment>
<proteinExistence type="evidence at protein level"/>
<gene>
    <name type="primary">gerN</name>
</gene>
<name>GERN_BACCE</name>
<protein>
    <recommendedName>
        <fullName>Na(+)/H(+)-K(+) antiporter GerN</fullName>
    </recommendedName>
</protein>
<evidence type="ECO:0000255" key="1"/>
<evidence type="ECO:0000269" key="2">
    <source>
    </source>
</evidence>
<evidence type="ECO:0000269" key="3">
    <source>
    </source>
</evidence>
<evidence type="ECO:0000269" key="4">
    <source>
    </source>
</evidence>
<evidence type="ECO:0000305" key="5"/>
<dbReference type="EMBL" id="AF246294">
    <property type="protein sequence ID" value="AAF91326.1"/>
    <property type="molecule type" value="Genomic_DNA"/>
</dbReference>
<dbReference type="RefSeq" id="WP_000393901.1">
    <property type="nucleotide sequence ID" value="NZ_WBPI01000006.1"/>
</dbReference>
<dbReference type="SMR" id="Q9KI10"/>
<dbReference type="TCDB" id="2.A.37.2.2">
    <property type="family name" value="the monovalent cation:proton antiporter-2 (cpa2) family"/>
</dbReference>
<dbReference type="eggNOG" id="COG0475">
    <property type="taxonomic scope" value="Bacteria"/>
</dbReference>
<dbReference type="SABIO-RK" id="Q9KI10"/>
<dbReference type="GO" id="GO:0016020">
    <property type="term" value="C:membrane"/>
    <property type="evidence" value="ECO:0000314"/>
    <property type="project" value="UniProtKB"/>
</dbReference>
<dbReference type="GO" id="GO:0015297">
    <property type="term" value="F:antiporter activity"/>
    <property type="evidence" value="ECO:0000314"/>
    <property type="project" value="UniProtKB"/>
</dbReference>
<dbReference type="GO" id="GO:0015081">
    <property type="term" value="F:sodium ion transmembrane transporter activity"/>
    <property type="evidence" value="ECO:0000314"/>
    <property type="project" value="UniProtKB"/>
</dbReference>
<dbReference type="GO" id="GO:0015385">
    <property type="term" value="F:sodium:proton antiporter activity"/>
    <property type="evidence" value="ECO:0000314"/>
    <property type="project" value="CACAO"/>
</dbReference>
<dbReference type="GO" id="GO:0035725">
    <property type="term" value="P:sodium ion transmembrane transport"/>
    <property type="evidence" value="ECO:0000314"/>
    <property type="project" value="UniProtKB"/>
</dbReference>
<dbReference type="GO" id="GO:0009847">
    <property type="term" value="P:spore germination"/>
    <property type="evidence" value="ECO:0000315"/>
    <property type="project" value="UniProtKB"/>
</dbReference>
<dbReference type="FunFam" id="1.20.1530.20:FF:000017">
    <property type="entry name" value="Na+/H+/K+ antiporter GerN"/>
    <property type="match status" value="1"/>
</dbReference>
<dbReference type="Gene3D" id="1.20.1530.20">
    <property type="match status" value="1"/>
</dbReference>
<dbReference type="InterPro" id="IPR006153">
    <property type="entry name" value="Cation/H_exchanger_TM"/>
</dbReference>
<dbReference type="InterPro" id="IPR004771">
    <property type="entry name" value="K/H_exchanger"/>
</dbReference>
<dbReference type="InterPro" id="IPR038770">
    <property type="entry name" value="Na+/solute_symporter_sf"/>
</dbReference>
<dbReference type="NCBIfam" id="TIGR00932">
    <property type="entry name" value="2a37"/>
    <property type="match status" value="1"/>
</dbReference>
<dbReference type="PANTHER" id="PTHR43562">
    <property type="entry name" value="NAPA-TYPE SODIUM/HYDROGEN ANTIPORTER"/>
    <property type="match status" value="1"/>
</dbReference>
<dbReference type="PANTHER" id="PTHR43562:SF3">
    <property type="entry name" value="SODIUM ION_PROTON EXCHANGER (EUROFUNG)"/>
    <property type="match status" value="1"/>
</dbReference>
<dbReference type="Pfam" id="PF00999">
    <property type="entry name" value="Na_H_Exchanger"/>
    <property type="match status" value="1"/>
</dbReference>
<reference key="1">
    <citation type="journal article" date="2001" name="J. Bacteriol.">
        <title>GerN, an antiporter homologue important in germination of Bacillus cereus endospores.</title>
        <authorList>
            <person name="Thackray P.D."/>
            <person name="Behravan J."/>
            <person name="Southworth T.W."/>
            <person name="Moir A."/>
        </authorList>
    </citation>
    <scope>NUCLEOTIDE SEQUENCE [GENOMIC DNA]</scope>
    <scope>FUNCTION IN GERMINATION</scope>
    <scope>DISRUPTION PHENOTYPE</scope>
    <scope>GENE NAME</scope>
    <source>
        <strain>ATCC 10876 / DSM 9378 / NRRL B-569</strain>
    </source>
</reference>
<reference key="2">
    <citation type="journal article" date="2001" name="J. Bacteriol.">
        <title>GerN, an endospore germination protein of Bacillus cereus, is an Na(+)/H(+)-K(+) antiporter.</title>
        <authorList>
            <person name="Southworth T.W."/>
            <person name="Guffanti A.A."/>
            <person name="Moir A."/>
            <person name="Krulwich T.A."/>
        </authorList>
    </citation>
    <scope>FUNCTION AS AN ANTIPORTER</scope>
    <scope>SUBCELLULAR LOCATION</scope>
    <scope>BIOPHYSICOCHEMICAL PROPERTIES</scope>
    <source>
        <strain>ATCC 10876 / DSM 9378 / NRRL B-569</strain>
    </source>
</reference>
<reference key="3">
    <citation type="journal article" date="2008" name="J. Bacteriol.">
        <title>The Bacillus cereus GerN and GerT protein homologs have distinct roles in spore germination and outgrowth, respectively.</title>
        <authorList>
            <person name="Senior A."/>
            <person name="Moir A."/>
        </authorList>
    </citation>
    <scope>FUNCTION IN GERMINATION</scope>
    <source>
        <strain>ATCC 10876 / DSM 9378 / NRRL B-569</strain>
    </source>
</reference>
<feature type="chain" id="PRO_0000425690" description="Na(+)/H(+)-K(+) antiporter GerN">
    <location>
        <begin position="1"/>
        <end position="387"/>
    </location>
</feature>
<feature type="transmembrane region" description="Helical" evidence="1">
    <location>
        <begin position="29"/>
        <end position="49"/>
    </location>
</feature>
<feature type="transmembrane region" description="Helical" evidence="1">
    <location>
        <begin position="54"/>
        <end position="74"/>
    </location>
</feature>
<feature type="transmembrane region" description="Helical" evidence="1">
    <location>
        <begin position="87"/>
        <end position="107"/>
    </location>
</feature>
<feature type="transmembrane region" description="Helical" evidence="1">
    <location>
        <begin position="114"/>
        <end position="134"/>
    </location>
</feature>
<feature type="transmembrane region" description="Helical" evidence="1">
    <location>
        <begin position="149"/>
        <end position="169"/>
    </location>
</feature>
<feature type="transmembrane region" description="Helical" evidence="1">
    <location>
        <begin position="175"/>
        <end position="195"/>
    </location>
</feature>
<feature type="transmembrane region" description="Helical" evidence="1">
    <location>
        <begin position="219"/>
        <end position="239"/>
    </location>
</feature>
<feature type="transmembrane region" description="Helical" evidence="1">
    <location>
        <begin position="263"/>
        <end position="283"/>
    </location>
</feature>
<feature type="transmembrane region" description="Helical" evidence="1">
    <location>
        <begin position="290"/>
        <end position="310"/>
    </location>
</feature>
<feature type="transmembrane region" description="Helical" evidence="1">
    <location>
        <begin position="324"/>
        <end position="344"/>
    </location>
</feature>
<feature type="transmembrane region" description="Helical" evidence="1">
    <location>
        <begin position="347"/>
        <end position="367"/>
    </location>
</feature>